<comment type="function">
    <text evidence="2">GTP hydrolase that promotes the GTP-dependent binding of aminoacyl-tRNA to the A-site of ribosomes during protein biosynthesis.</text>
</comment>
<comment type="catalytic activity">
    <reaction evidence="2">
        <text>GTP + H2O = GDP + phosphate + H(+)</text>
        <dbReference type="Rhea" id="RHEA:19669"/>
        <dbReference type="ChEBI" id="CHEBI:15377"/>
        <dbReference type="ChEBI" id="CHEBI:15378"/>
        <dbReference type="ChEBI" id="CHEBI:37565"/>
        <dbReference type="ChEBI" id="CHEBI:43474"/>
        <dbReference type="ChEBI" id="CHEBI:58189"/>
        <dbReference type="EC" id="3.6.5.3"/>
    </reaction>
    <physiologicalReaction direction="left-to-right" evidence="2">
        <dbReference type="Rhea" id="RHEA:19670"/>
    </physiologicalReaction>
</comment>
<comment type="subunit">
    <text evidence="2">Monomer.</text>
</comment>
<comment type="subcellular location">
    <subcellularLocation>
        <location evidence="2">Cytoplasm</location>
    </subcellularLocation>
</comment>
<comment type="similarity">
    <text evidence="2">Belongs to the TRAFAC class translation factor GTPase superfamily. Classic translation factor GTPase family. EF-Tu/EF-1A subfamily.</text>
</comment>
<protein>
    <recommendedName>
        <fullName evidence="2">Elongation factor Tu</fullName>
        <shortName evidence="2">EF-Tu</shortName>
        <ecNumber evidence="2">3.6.5.3</ecNumber>
    </recommendedName>
</protein>
<reference key="1">
    <citation type="journal article" date="2006" name="Proc. Natl. Acad. Sci. U.S.A.">
        <title>Multireplicon genome architecture of Lactobacillus salivarius.</title>
        <authorList>
            <person name="Claesson M.J."/>
            <person name="Li Y."/>
            <person name="Leahy S."/>
            <person name="Canchaya C."/>
            <person name="van Pijkeren J.P."/>
            <person name="Cerdeno-Tarraga A.M."/>
            <person name="Parkhill J."/>
            <person name="Flynn S."/>
            <person name="O'Sullivan G.C."/>
            <person name="Collins J.K."/>
            <person name="Higgins D."/>
            <person name="Shanahan F."/>
            <person name="Fitzgerald G.F."/>
            <person name="van Sinderen D."/>
            <person name="O'Toole P.W."/>
        </authorList>
    </citation>
    <scope>NUCLEOTIDE SEQUENCE [LARGE SCALE GENOMIC DNA]</scope>
    <source>
        <strain>UCC118</strain>
    </source>
</reference>
<organism>
    <name type="scientific">Ligilactobacillus salivarius (strain UCC118)</name>
    <name type="common">Lactobacillus salivarius</name>
    <dbReference type="NCBI Taxonomy" id="362948"/>
    <lineage>
        <taxon>Bacteria</taxon>
        <taxon>Bacillati</taxon>
        <taxon>Bacillota</taxon>
        <taxon>Bacilli</taxon>
        <taxon>Lactobacillales</taxon>
        <taxon>Lactobacillaceae</taxon>
        <taxon>Ligilactobacillus</taxon>
    </lineage>
</organism>
<proteinExistence type="inferred from homology"/>
<name>EFTU_LIGS1</name>
<accession>Q1WU83</accession>
<gene>
    <name evidence="2" type="primary">tuf</name>
    <name type="ordered locus">LSL_0642</name>
</gene>
<feature type="chain" id="PRO_1000015678" description="Elongation factor Tu">
    <location>
        <begin position="1"/>
        <end position="395"/>
    </location>
</feature>
<feature type="domain" description="tr-type G">
    <location>
        <begin position="10"/>
        <end position="204"/>
    </location>
</feature>
<feature type="region of interest" description="G1" evidence="1">
    <location>
        <begin position="19"/>
        <end position="26"/>
    </location>
</feature>
<feature type="region of interest" description="G2" evidence="1">
    <location>
        <begin position="60"/>
        <end position="64"/>
    </location>
</feature>
<feature type="region of interest" description="G3" evidence="1">
    <location>
        <begin position="81"/>
        <end position="84"/>
    </location>
</feature>
<feature type="region of interest" description="G4" evidence="1">
    <location>
        <begin position="136"/>
        <end position="139"/>
    </location>
</feature>
<feature type="region of interest" description="G5" evidence="1">
    <location>
        <begin position="174"/>
        <end position="176"/>
    </location>
</feature>
<feature type="binding site" evidence="2">
    <location>
        <begin position="19"/>
        <end position="26"/>
    </location>
    <ligand>
        <name>GTP</name>
        <dbReference type="ChEBI" id="CHEBI:37565"/>
    </ligand>
</feature>
<feature type="binding site" evidence="2">
    <location>
        <position position="26"/>
    </location>
    <ligand>
        <name>Mg(2+)</name>
        <dbReference type="ChEBI" id="CHEBI:18420"/>
    </ligand>
</feature>
<feature type="binding site" evidence="2">
    <location>
        <begin position="81"/>
        <end position="85"/>
    </location>
    <ligand>
        <name>GTP</name>
        <dbReference type="ChEBI" id="CHEBI:37565"/>
    </ligand>
</feature>
<feature type="binding site" evidence="2">
    <location>
        <begin position="136"/>
        <end position="139"/>
    </location>
    <ligand>
        <name>GTP</name>
        <dbReference type="ChEBI" id="CHEBI:37565"/>
    </ligand>
</feature>
<dbReference type="EC" id="3.6.5.3" evidence="2"/>
<dbReference type="EMBL" id="CP000233">
    <property type="protein sequence ID" value="ABD99452.1"/>
    <property type="molecule type" value="Genomic_DNA"/>
</dbReference>
<dbReference type="RefSeq" id="WP_003700007.1">
    <property type="nucleotide sequence ID" value="NC_007929.1"/>
</dbReference>
<dbReference type="RefSeq" id="YP_535535.1">
    <property type="nucleotide sequence ID" value="NC_007929.1"/>
</dbReference>
<dbReference type="SMR" id="Q1WU83"/>
<dbReference type="STRING" id="362948.LSL_0642"/>
<dbReference type="KEGG" id="lsl:LSL_0642"/>
<dbReference type="PATRIC" id="fig|362948.14.peg.722"/>
<dbReference type="HOGENOM" id="CLU_007265_0_0_9"/>
<dbReference type="OrthoDB" id="9804504at2"/>
<dbReference type="Proteomes" id="UP000006559">
    <property type="component" value="Chromosome"/>
</dbReference>
<dbReference type="GO" id="GO:0005829">
    <property type="term" value="C:cytosol"/>
    <property type="evidence" value="ECO:0007669"/>
    <property type="project" value="TreeGrafter"/>
</dbReference>
<dbReference type="GO" id="GO:0005525">
    <property type="term" value="F:GTP binding"/>
    <property type="evidence" value="ECO:0007669"/>
    <property type="project" value="UniProtKB-UniRule"/>
</dbReference>
<dbReference type="GO" id="GO:0003924">
    <property type="term" value="F:GTPase activity"/>
    <property type="evidence" value="ECO:0007669"/>
    <property type="project" value="InterPro"/>
</dbReference>
<dbReference type="GO" id="GO:0003746">
    <property type="term" value="F:translation elongation factor activity"/>
    <property type="evidence" value="ECO:0007669"/>
    <property type="project" value="UniProtKB-UniRule"/>
</dbReference>
<dbReference type="CDD" id="cd01884">
    <property type="entry name" value="EF_Tu"/>
    <property type="match status" value="1"/>
</dbReference>
<dbReference type="CDD" id="cd03697">
    <property type="entry name" value="EFTU_II"/>
    <property type="match status" value="1"/>
</dbReference>
<dbReference type="CDD" id="cd03707">
    <property type="entry name" value="EFTU_III"/>
    <property type="match status" value="1"/>
</dbReference>
<dbReference type="FunFam" id="2.40.30.10:FF:000001">
    <property type="entry name" value="Elongation factor Tu"/>
    <property type="match status" value="1"/>
</dbReference>
<dbReference type="FunFam" id="3.40.50.300:FF:000003">
    <property type="entry name" value="Elongation factor Tu"/>
    <property type="match status" value="1"/>
</dbReference>
<dbReference type="Gene3D" id="3.40.50.300">
    <property type="entry name" value="P-loop containing nucleotide triphosphate hydrolases"/>
    <property type="match status" value="1"/>
</dbReference>
<dbReference type="Gene3D" id="2.40.30.10">
    <property type="entry name" value="Translation factors"/>
    <property type="match status" value="2"/>
</dbReference>
<dbReference type="HAMAP" id="MF_00118_B">
    <property type="entry name" value="EF_Tu_B"/>
    <property type="match status" value="1"/>
</dbReference>
<dbReference type="InterPro" id="IPR041709">
    <property type="entry name" value="EF-Tu_GTP-bd"/>
</dbReference>
<dbReference type="InterPro" id="IPR050055">
    <property type="entry name" value="EF-Tu_GTPase"/>
</dbReference>
<dbReference type="InterPro" id="IPR004161">
    <property type="entry name" value="EFTu-like_2"/>
</dbReference>
<dbReference type="InterPro" id="IPR033720">
    <property type="entry name" value="EFTU_2"/>
</dbReference>
<dbReference type="InterPro" id="IPR031157">
    <property type="entry name" value="G_TR_CS"/>
</dbReference>
<dbReference type="InterPro" id="IPR027417">
    <property type="entry name" value="P-loop_NTPase"/>
</dbReference>
<dbReference type="InterPro" id="IPR005225">
    <property type="entry name" value="Small_GTP-bd"/>
</dbReference>
<dbReference type="InterPro" id="IPR000795">
    <property type="entry name" value="T_Tr_GTP-bd_dom"/>
</dbReference>
<dbReference type="InterPro" id="IPR009000">
    <property type="entry name" value="Transl_B-barrel_sf"/>
</dbReference>
<dbReference type="InterPro" id="IPR009001">
    <property type="entry name" value="Transl_elong_EF1A/Init_IF2_C"/>
</dbReference>
<dbReference type="InterPro" id="IPR004541">
    <property type="entry name" value="Transl_elong_EFTu/EF1A_bac/org"/>
</dbReference>
<dbReference type="InterPro" id="IPR004160">
    <property type="entry name" value="Transl_elong_EFTu/EF1A_C"/>
</dbReference>
<dbReference type="NCBIfam" id="TIGR00485">
    <property type="entry name" value="EF-Tu"/>
    <property type="match status" value="1"/>
</dbReference>
<dbReference type="NCBIfam" id="NF000766">
    <property type="entry name" value="PRK00049.1"/>
    <property type="match status" value="1"/>
</dbReference>
<dbReference type="NCBIfam" id="NF009372">
    <property type="entry name" value="PRK12735.1"/>
    <property type="match status" value="1"/>
</dbReference>
<dbReference type="NCBIfam" id="NF009373">
    <property type="entry name" value="PRK12736.1"/>
    <property type="match status" value="1"/>
</dbReference>
<dbReference type="NCBIfam" id="TIGR00231">
    <property type="entry name" value="small_GTP"/>
    <property type="match status" value="1"/>
</dbReference>
<dbReference type="PANTHER" id="PTHR43721:SF22">
    <property type="entry name" value="ELONGATION FACTOR TU, MITOCHONDRIAL"/>
    <property type="match status" value="1"/>
</dbReference>
<dbReference type="PANTHER" id="PTHR43721">
    <property type="entry name" value="ELONGATION FACTOR TU-RELATED"/>
    <property type="match status" value="1"/>
</dbReference>
<dbReference type="Pfam" id="PF00009">
    <property type="entry name" value="GTP_EFTU"/>
    <property type="match status" value="1"/>
</dbReference>
<dbReference type="Pfam" id="PF03144">
    <property type="entry name" value="GTP_EFTU_D2"/>
    <property type="match status" value="1"/>
</dbReference>
<dbReference type="Pfam" id="PF03143">
    <property type="entry name" value="GTP_EFTU_D3"/>
    <property type="match status" value="1"/>
</dbReference>
<dbReference type="PRINTS" id="PR00315">
    <property type="entry name" value="ELONGATNFCT"/>
</dbReference>
<dbReference type="SUPFAM" id="SSF50465">
    <property type="entry name" value="EF-Tu/eEF-1alpha/eIF2-gamma C-terminal domain"/>
    <property type="match status" value="1"/>
</dbReference>
<dbReference type="SUPFAM" id="SSF52540">
    <property type="entry name" value="P-loop containing nucleoside triphosphate hydrolases"/>
    <property type="match status" value="1"/>
</dbReference>
<dbReference type="SUPFAM" id="SSF50447">
    <property type="entry name" value="Translation proteins"/>
    <property type="match status" value="1"/>
</dbReference>
<dbReference type="PROSITE" id="PS00301">
    <property type="entry name" value="G_TR_1"/>
    <property type="match status" value="1"/>
</dbReference>
<dbReference type="PROSITE" id="PS51722">
    <property type="entry name" value="G_TR_2"/>
    <property type="match status" value="1"/>
</dbReference>
<evidence type="ECO:0000250" key="1"/>
<evidence type="ECO:0000255" key="2">
    <source>
        <dbReference type="HAMAP-Rule" id="MF_00118"/>
    </source>
</evidence>
<keyword id="KW-0963">Cytoplasm</keyword>
<keyword id="KW-0251">Elongation factor</keyword>
<keyword id="KW-0342">GTP-binding</keyword>
<keyword id="KW-0378">Hydrolase</keyword>
<keyword id="KW-0460">Magnesium</keyword>
<keyword id="KW-0479">Metal-binding</keyword>
<keyword id="KW-0547">Nucleotide-binding</keyword>
<keyword id="KW-0648">Protein biosynthesis</keyword>
<keyword id="KW-1185">Reference proteome</keyword>
<sequence>MAKEHYERTKPHVNIGTIGHVDHGKTTLTAAITKVLAEKGLAEASDYASIDAAPEERERGITINTAHVEYETEKRHYAHIDAPGHADYVKNMITGAAQMDGAILVVAATDGPMPQTREHILLARQVGVEYIVVFLNKCDLVDDDELLDLVEMEVRDLLSEYDFPGDDIPVIRGSALKALEGDKDAEAQIMELMDTVDEYIPTPQRPTDKPFLMPVEDVFTITGRGTVASGRIDRGTVKVGDEVEIVGLKDDVVKTTVTGVEMFRKTLDEGEAGDNIGALLRGVDRTQVERGQVLAKPGSIQTHKKFKGEVYVLTKDEGGRHTPFFSNYRPQFYFHTTDVTGVIELPEGVEMVMPGDNVTFTVELIAPVAIEKGLKFTVREGGRTVGAGVVSEIDD</sequence>